<reference key="1">
    <citation type="submission" date="2006-01" db="EMBL/GenBank/DDBJ databases">
        <title>Complete sequence of Anaeromyxobacter dehalogenans 2CP-C.</title>
        <authorList>
            <person name="Copeland A."/>
            <person name="Lucas S."/>
            <person name="Lapidus A."/>
            <person name="Barry K."/>
            <person name="Detter J.C."/>
            <person name="Glavina T."/>
            <person name="Hammon N."/>
            <person name="Israni S."/>
            <person name="Pitluck S."/>
            <person name="Brettin T."/>
            <person name="Bruce D."/>
            <person name="Han C."/>
            <person name="Tapia R."/>
            <person name="Gilna P."/>
            <person name="Kiss H."/>
            <person name="Schmutz J."/>
            <person name="Larimer F."/>
            <person name="Land M."/>
            <person name="Kyrpides N."/>
            <person name="Anderson I."/>
            <person name="Sanford R.A."/>
            <person name="Ritalahti K.M."/>
            <person name="Thomas H.S."/>
            <person name="Kirby J.R."/>
            <person name="Zhulin I.B."/>
            <person name="Loeffler F.E."/>
            <person name="Richardson P."/>
        </authorList>
    </citation>
    <scope>NUCLEOTIDE SEQUENCE [LARGE SCALE GENOMIC DNA]</scope>
    <source>
        <strain>2CP-C</strain>
    </source>
</reference>
<evidence type="ECO:0000255" key="1">
    <source>
        <dbReference type="HAMAP-Rule" id="MF_00514"/>
    </source>
</evidence>
<evidence type="ECO:0000256" key="2">
    <source>
        <dbReference type="SAM" id="MobiDB-lite"/>
    </source>
</evidence>
<evidence type="ECO:0000305" key="3"/>
<gene>
    <name evidence="1" type="primary">rpmI</name>
    <name type="ordered locus">Adeh_1974</name>
</gene>
<sequence length="67" mass="7778">MPKLKTKSGAKKRFVPKKSGKVKFRRAGVRHLATFGKTKKQKRHLRGTDHLAPMDEKKIKECFPYAR</sequence>
<accession>Q2IJB9</accession>
<feature type="chain" id="PRO_0000258630" description="Large ribosomal subunit protein bL35">
    <location>
        <begin position="1"/>
        <end position="67"/>
    </location>
</feature>
<feature type="region of interest" description="Disordered" evidence="2">
    <location>
        <begin position="1"/>
        <end position="20"/>
    </location>
</feature>
<organism>
    <name type="scientific">Anaeromyxobacter dehalogenans (strain 2CP-C)</name>
    <dbReference type="NCBI Taxonomy" id="290397"/>
    <lineage>
        <taxon>Bacteria</taxon>
        <taxon>Pseudomonadati</taxon>
        <taxon>Myxococcota</taxon>
        <taxon>Myxococcia</taxon>
        <taxon>Myxococcales</taxon>
        <taxon>Cystobacterineae</taxon>
        <taxon>Anaeromyxobacteraceae</taxon>
        <taxon>Anaeromyxobacter</taxon>
    </lineage>
</organism>
<protein>
    <recommendedName>
        <fullName evidence="1">Large ribosomal subunit protein bL35</fullName>
    </recommendedName>
    <alternativeName>
        <fullName evidence="3">50S ribosomal protein L35</fullName>
    </alternativeName>
</protein>
<comment type="similarity">
    <text evidence="1">Belongs to the bacterial ribosomal protein bL35 family.</text>
</comment>
<name>RL35_ANADE</name>
<keyword id="KW-1185">Reference proteome</keyword>
<keyword id="KW-0687">Ribonucleoprotein</keyword>
<keyword id="KW-0689">Ribosomal protein</keyword>
<dbReference type="EMBL" id="CP000251">
    <property type="protein sequence ID" value="ABC81745.1"/>
    <property type="molecule type" value="Genomic_DNA"/>
</dbReference>
<dbReference type="RefSeq" id="WP_011421027.1">
    <property type="nucleotide sequence ID" value="NC_007760.1"/>
</dbReference>
<dbReference type="SMR" id="Q2IJB9"/>
<dbReference type="STRING" id="290397.Adeh_1974"/>
<dbReference type="KEGG" id="ade:Adeh_1974"/>
<dbReference type="eggNOG" id="COG0291">
    <property type="taxonomic scope" value="Bacteria"/>
</dbReference>
<dbReference type="HOGENOM" id="CLU_169643_2_1_7"/>
<dbReference type="OrthoDB" id="9804851at2"/>
<dbReference type="Proteomes" id="UP000001935">
    <property type="component" value="Chromosome"/>
</dbReference>
<dbReference type="GO" id="GO:0022625">
    <property type="term" value="C:cytosolic large ribosomal subunit"/>
    <property type="evidence" value="ECO:0007669"/>
    <property type="project" value="TreeGrafter"/>
</dbReference>
<dbReference type="GO" id="GO:0003735">
    <property type="term" value="F:structural constituent of ribosome"/>
    <property type="evidence" value="ECO:0007669"/>
    <property type="project" value="InterPro"/>
</dbReference>
<dbReference type="GO" id="GO:0006412">
    <property type="term" value="P:translation"/>
    <property type="evidence" value="ECO:0007669"/>
    <property type="project" value="UniProtKB-UniRule"/>
</dbReference>
<dbReference type="FunFam" id="4.10.410.60:FF:000001">
    <property type="entry name" value="50S ribosomal protein L35"/>
    <property type="match status" value="1"/>
</dbReference>
<dbReference type="Gene3D" id="4.10.410.60">
    <property type="match status" value="1"/>
</dbReference>
<dbReference type="HAMAP" id="MF_00514">
    <property type="entry name" value="Ribosomal_bL35"/>
    <property type="match status" value="1"/>
</dbReference>
<dbReference type="InterPro" id="IPR001706">
    <property type="entry name" value="Ribosomal_bL35"/>
</dbReference>
<dbReference type="InterPro" id="IPR021137">
    <property type="entry name" value="Ribosomal_bL35-like"/>
</dbReference>
<dbReference type="InterPro" id="IPR018265">
    <property type="entry name" value="Ribosomal_bL35_CS"/>
</dbReference>
<dbReference type="InterPro" id="IPR037229">
    <property type="entry name" value="Ribosomal_bL35_sf"/>
</dbReference>
<dbReference type="NCBIfam" id="TIGR00001">
    <property type="entry name" value="rpmI_bact"/>
    <property type="match status" value="1"/>
</dbReference>
<dbReference type="PANTHER" id="PTHR33343">
    <property type="entry name" value="54S RIBOSOMAL PROTEIN BL35M"/>
    <property type="match status" value="1"/>
</dbReference>
<dbReference type="PANTHER" id="PTHR33343:SF1">
    <property type="entry name" value="LARGE RIBOSOMAL SUBUNIT PROTEIN BL35M"/>
    <property type="match status" value="1"/>
</dbReference>
<dbReference type="Pfam" id="PF01632">
    <property type="entry name" value="Ribosomal_L35p"/>
    <property type="match status" value="1"/>
</dbReference>
<dbReference type="PRINTS" id="PR00064">
    <property type="entry name" value="RIBOSOMALL35"/>
</dbReference>
<dbReference type="SUPFAM" id="SSF143034">
    <property type="entry name" value="L35p-like"/>
    <property type="match status" value="1"/>
</dbReference>
<dbReference type="PROSITE" id="PS00936">
    <property type="entry name" value="RIBOSOMAL_L35"/>
    <property type="match status" value="1"/>
</dbReference>
<proteinExistence type="inferred from homology"/>